<name>NU4M_BRAFL</name>
<proteinExistence type="inferred from homology"/>
<sequence length="452" mass="49914">MNHLVLGYVGLVIGVIVTKKSMVWRVGQVGSVLLMLPATVLVNMNMTISNVSYMMTSDFVSLGLTVLSIWLLPLMLLASQQHMVSESLIYQRVFVGCQVFLTGALVLAFMASDLLLFYIAFESTLLPTLMLITRWGAQKERYQAGTYFMFFTLVGSLPLLICLIGQYQMVGSLALDLSYEGVFQLSYLVNFWWVGCILAFLVKLPLYGVHLWLPKAHVEAPIAGSMVLAGVLLKLGGYGMMRVSLMWGATAMLSSEVFLALALWGIVVMGGICLRQTDLKSLIAYSSVGHMALVVGGVLTGVAWGYNGAMVLMIAHGLVSSCLFCLANLWYERSSTRNLSGSRGLIMIFPLISSGWFLMSLMNMALPPAINLFGELVAMVALYNWSPYSIVYMSLGAVLTAAYSLYLFGMSQWGNTMKNYKNLYTITSREYLLTTLHLVPAIYLIFYLGLMF</sequence>
<gene>
    <name type="primary">ND4</name>
    <name type="synonym">NAD4</name>
    <name type="synonym">NADH4</name>
</gene>
<protein>
    <recommendedName>
        <fullName>NADH-ubiquinone oxidoreductase chain 4</fullName>
        <ecNumber>7.1.1.2</ecNumber>
    </recommendedName>
    <alternativeName>
        <fullName>NADH dehydrogenase subunit 4</fullName>
    </alternativeName>
</protein>
<accession>O47423</accession>
<reference key="1">
    <citation type="journal article" date="1999" name="Mol. Biol. Evol.">
        <title>Complete sequence, gene arrangement, and genetic code of mitochondrial DNA of the cephalochordate Branchiostoma floridae (Amphioxus).</title>
        <authorList>
            <person name="Boore J.L."/>
            <person name="Daehler L.L."/>
            <person name="Brown W.M."/>
        </authorList>
    </citation>
    <scope>NUCLEOTIDE SEQUENCE [LARGE SCALE GENOMIC DNA]</scope>
    <source>
        <strain evidence="4">S238N-H82</strain>
    </source>
</reference>
<evidence type="ECO:0000250" key="1"/>
<evidence type="ECO:0000255" key="2"/>
<evidence type="ECO:0000305" key="3"/>
<evidence type="ECO:0000312" key="4">
    <source>
        <dbReference type="Proteomes" id="UP000001554"/>
    </source>
</evidence>
<dbReference type="EC" id="7.1.1.2"/>
<dbReference type="EMBL" id="AF098298">
    <property type="protein sequence ID" value="AAB87992.1"/>
    <property type="molecule type" value="Genomic_DNA"/>
</dbReference>
<dbReference type="RefSeq" id="NP_007764.1">
    <property type="nucleotide sequence ID" value="NC_000834.1"/>
</dbReference>
<dbReference type="SMR" id="O47423"/>
<dbReference type="FunCoup" id="O47423">
    <property type="interactions" value="11"/>
</dbReference>
<dbReference type="STRING" id="7739.O47423"/>
<dbReference type="GeneID" id="808733"/>
<dbReference type="KEGG" id="bfo:808733"/>
<dbReference type="CTD" id="4538"/>
<dbReference type="InParanoid" id="O47423"/>
<dbReference type="OMA" id="ITRWGNQ"/>
<dbReference type="OrthoDB" id="564260at2759"/>
<dbReference type="Proteomes" id="UP000001554">
    <property type="component" value="Mitochondrion MT"/>
</dbReference>
<dbReference type="GO" id="GO:0031966">
    <property type="term" value="C:mitochondrial membrane"/>
    <property type="evidence" value="ECO:0007669"/>
    <property type="project" value="UniProtKB-SubCell"/>
</dbReference>
<dbReference type="GO" id="GO:0045271">
    <property type="term" value="C:respiratory chain complex I"/>
    <property type="evidence" value="ECO:0000318"/>
    <property type="project" value="GO_Central"/>
</dbReference>
<dbReference type="GO" id="GO:0008137">
    <property type="term" value="F:NADH dehydrogenase (ubiquinone) activity"/>
    <property type="evidence" value="ECO:0007669"/>
    <property type="project" value="UniProtKB-EC"/>
</dbReference>
<dbReference type="GO" id="GO:0048039">
    <property type="term" value="F:ubiquinone binding"/>
    <property type="evidence" value="ECO:0000318"/>
    <property type="project" value="GO_Central"/>
</dbReference>
<dbReference type="GO" id="GO:0009060">
    <property type="term" value="P:aerobic respiration"/>
    <property type="evidence" value="ECO:0000318"/>
    <property type="project" value="GO_Central"/>
</dbReference>
<dbReference type="GO" id="GO:0042773">
    <property type="term" value="P:ATP synthesis coupled electron transport"/>
    <property type="evidence" value="ECO:0007669"/>
    <property type="project" value="InterPro"/>
</dbReference>
<dbReference type="GO" id="GO:0015990">
    <property type="term" value="P:electron transport coupled proton transport"/>
    <property type="evidence" value="ECO:0000318"/>
    <property type="project" value="GO_Central"/>
</dbReference>
<dbReference type="InterPro" id="IPR000260">
    <property type="entry name" value="NADH4_N"/>
</dbReference>
<dbReference type="InterPro" id="IPR010227">
    <property type="entry name" value="NADH_Q_OxRdtase_chainM/4"/>
</dbReference>
<dbReference type="InterPro" id="IPR003918">
    <property type="entry name" value="NADH_UbQ_OxRdtase"/>
</dbReference>
<dbReference type="InterPro" id="IPR001750">
    <property type="entry name" value="ND/Mrp_TM"/>
</dbReference>
<dbReference type="NCBIfam" id="TIGR01972">
    <property type="entry name" value="NDH_I_M"/>
    <property type="match status" value="1"/>
</dbReference>
<dbReference type="PANTHER" id="PTHR43507">
    <property type="entry name" value="NADH-UBIQUINONE OXIDOREDUCTASE CHAIN 4"/>
    <property type="match status" value="1"/>
</dbReference>
<dbReference type="PANTHER" id="PTHR43507:SF20">
    <property type="entry name" value="NADH-UBIQUINONE OXIDOREDUCTASE CHAIN 4"/>
    <property type="match status" value="1"/>
</dbReference>
<dbReference type="Pfam" id="PF01059">
    <property type="entry name" value="Oxidored_q5_N"/>
    <property type="match status" value="1"/>
</dbReference>
<dbReference type="Pfam" id="PF00361">
    <property type="entry name" value="Proton_antipo_M"/>
    <property type="match status" value="1"/>
</dbReference>
<dbReference type="PRINTS" id="PR01437">
    <property type="entry name" value="NUOXDRDTASE4"/>
</dbReference>
<feature type="chain" id="PRO_0000117908" description="NADH-ubiquinone oxidoreductase chain 4">
    <location>
        <begin position="1"/>
        <end position="452"/>
    </location>
</feature>
<feature type="transmembrane region" description="Helical" evidence="2">
    <location>
        <begin position="4"/>
        <end position="24"/>
    </location>
</feature>
<feature type="transmembrane region" description="Helical" evidence="2">
    <location>
        <begin position="29"/>
        <end position="49"/>
    </location>
</feature>
<feature type="transmembrane region" description="Helical" evidence="2">
    <location>
        <begin position="59"/>
        <end position="79"/>
    </location>
</feature>
<feature type="transmembrane region" description="Helical" evidence="2">
    <location>
        <begin position="88"/>
        <end position="110"/>
    </location>
</feature>
<feature type="transmembrane region" description="Helical" evidence="2">
    <location>
        <begin position="114"/>
        <end position="136"/>
    </location>
</feature>
<feature type="transmembrane region" description="Helical" evidence="2">
    <location>
        <begin position="144"/>
        <end position="164"/>
    </location>
</feature>
<feature type="transmembrane region" description="Helical" evidence="2">
    <location>
        <begin position="182"/>
        <end position="202"/>
    </location>
</feature>
<feature type="transmembrane region" description="Helical" evidence="2">
    <location>
        <begin position="221"/>
        <end position="241"/>
    </location>
</feature>
<feature type="transmembrane region" description="Helical" evidence="2">
    <location>
        <begin position="252"/>
        <end position="272"/>
    </location>
</feature>
<feature type="transmembrane region" description="Helical" evidence="2">
    <location>
        <begin position="282"/>
        <end position="304"/>
    </location>
</feature>
<feature type="transmembrane region" description="Helical" evidence="2">
    <location>
        <begin position="309"/>
        <end position="331"/>
    </location>
</feature>
<feature type="transmembrane region" description="Helical" evidence="2">
    <location>
        <begin position="345"/>
        <end position="365"/>
    </location>
</feature>
<feature type="transmembrane region" description="Helical" evidence="2">
    <location>
        <begin position="390"/>
        <end position="410"/>
    </location>
</feature>
<feature type="transmembrane region" description="Helical" evidence="2">
    <location>
        <begin position="432"/>
        <end position="452"/>
    </location>
</feature>
<geneLocation type="mitochondrion"/>
<keyword id="KW-0249">Electron transport</keyword>
<keyword id="KW-0472">Membrane</keyword>
<keyword id="KW-0496">Mitochondrion</keyword>
<keyword id="KW-0520">NAD</keyword>
<keyword id="KW-1185">Reference proteome</keyword>
<keyword id="KW-0679">Respiratory chain</keyword>
<keyword id="KW-1278">Translocase</keyword>
<keyword id="KW-0812">Transmembrane</keyword>
<keyword id="KW-1133">Transmembrane helix</keyword>
<keyword id="KW-0813">Transport</keyword>
<keyword id="KW-0830">Ubiquinone</keyword>
<comment type="function">
    <text evidence="1">Core subunit of the mitochondrial membrane respiratory chain NADH dehydrogenase (Complex I) that is believed to belong to the minimal assembly required for catalysis. Complex I functions in the transfer of electrons from NADH to the respiratory chain. The immediate electron acceptor for the enzyme is believed to be ubiquinone (By similarity).</text>
</comment>
<comment type="catalytic activity">
    <reaction>
        <text>a ubiquinone + NADH + 5 H(+)(in) = a ubiquinol + NAD(+) + 4 H(+)(out)</text>
        <dbReference type="Rhea" id="RHEA:29091"/>
        <dbReference type="Rhea" id="RHEA-COMP:9565"/>
        <dbReference type="Rhea" id="RHEA-COMP:9566"/>
        <dbReference type="ChEBI" id="CHEBI:15378"/>
        <dbReference type="ChEBI" id="CHEBI:16389"/>
        <dbReference type="ChEBI" id="CHEBI:17976"/>
        <dbReference type="ChEBI" id="CHEBI:57540"/>
        <dbReference type="ChEBI" id="CHEBI:57945"/>
        <dbReference type="EC" id="7.1.1.2"/>
    </reaction>
</comment>
<comment type="subcellular location">
    <subcellularLocation>
        <location evidence="1">Mitochondrion membrane</location>
        <topology evidence="1">Multi-pass membrane protein</topology>
    </subcellularLocation>
</comment>
<comment type="similarity">
    <text evidence="3">Belongs to the complex I subunit 4 family.</text>
</comment>
<organism>
    <name type="scientific">Branchiostoma floridae</name>
    <name type="common">Florida lancelet</name>
    <name type="synonym">Amphioxus</name>
    <dbReference type="NCBI Taxonomy" id="7739"/>
    <lineage>
        <taxon>Eukaryota</taxon>
        <taxon>Metazoa</taxon>
        <taxon>Chordata</taxon>
        <taxon>Cephalochordata</taxon>
        <taxon>Leptocardii</taxon>
        <taxon>Amphioxiformes</taxon>
        <taxon>Branchiostomatidae</taxon>
        <taxon>Branchiostoma</taxon>
    </lineage>
</organism>